<gene>
    <name evidence="1" type="primary">addA</name>
    <name type="ordered locus">Dhaf_2832</name>
</gene>
<accession>B8FXD7</accession>
<reference key="1">
    <citation type="journal article" date="2012" name="BMC Microbiol.">
        <title>Genome sequence of Desulfitobacterium hafniense DCB-2, a Gram-positive anaerobe capable of dehalogenation and metal reduction.</title>
        <authorList>
            <person name="Kim S.H."/>
            <person name="Harzman C."/>
            <person name="Davis J.K."/>
            <person name="Hutcheson R."/>
            <person name="Broderick J.B."/>
            <person name="Marsh T.L."/>
            <person name="Tiedje J.M."/>
        </authorList>
    </citation>
    <scope>NUCLEOTIDE SEQUENCE [LARGE SCALE GENOMIC DNA]</scope>
    <source>
        <strain>DSM 10664 / DCB-2</strain>
    </source>
</reference>
<organism>
    <name type="scientific">Desulfitobacterium hafniense (strain DSM 10664 / DCB-2)</name>
    <dbReference type="NCBI Taxonomy" id="272564"/>
    <lineage>
        <taxon>Bacteria</taxon>
        <taxon>Bacillati</taxon>
        <taxon>Bacillota</taxon>
        <taxon>Clostridia</taxon>
        <taxon>Eubacteriales</taxon>
        <taxon>Desulfitobacteriaceae</taxon>
        <taxon>Desulfitobacterium</taxon>
    </lineage>
</organism>
<keyword id="KW-0067">ATP-binding</keyword>
<keyword id="KW-0227">DNA damage</keyword>
<keyword id="KW-0234">DNA repair</keyword>
<keyword id="KW-0238">DNA-binding</keyword>
<keyword id="KW-0269">Exonuclease</keyword>
<keyword id="KW-0347">Helicase</keyword>
<keyword id="KW-0378">Hydrolase</keyword>
<keyword id="KW-0413">Isomerase</keyword>
<keyword id="KW-0540">Nuclease</keyword>
<keyword id="KW-0547">Nucleotide-binding</keyword>
<comment type="function">
    <text evidence="1">The heterodimer acts as both an ATP-dependent DNA helicase and an ATP-dependent, dual-direction single-stranded exonuclease. Recognizes the chi site generating a DNA molecule suitable for the initiation of homologous recombination. The AddA nuclease domain is required for chi fragment generation; this subunit has the helicase and 3' -&gt; 5' nuclease activities.</text>
</comment>
<comment type="catalytic activity">
    <reaction evidence="1">
        <text>Couples ATP hydrolysis with the unwinding of duplex DNA by translocating in the 3'-5' direction.</text>
        <dbReference type="EC" id="5.6.2.4"/>
    </reaction>
</comment>
<comment type="catalytic activity">
    <reaction evidence="1">
        <text>ATP + H2O = ADP + phosphate + H(+)</text>
        <dbReference type="Rhea" id="RHEA:13065"/>
        <dbReference type="ChEBI" id="CHEBI:15377"/>
        <dbReference type="ChEBI" id="CHEBI:15378"/>
        <dbReference type="ChEBI" id="CHEBI:30616"/>
        <dbReference type="ChEBI" id="CHEBI:43474"/>
        <dbReference type="ChEBI" id="CHEBI:456216"/>
        <dbReference type="EC" id="5.6.2.4"/>
    </reaction>
</comment>
<comment type="cofactor">
    <cofactor evidence="1">
        <name>Mg(2+)</name>
        <dbReference type="ChEBI" id="CHEBI:18420"/>
    </cofactor>
</comment>
<comment type="subunit">
    <text evidence="1">Heterodimer of AddA and AddB/RexB.</text>
</comment>
<comment type="similarity">
    <text evidence="1">Belongs to the helicase family. AddA subfamily.</text>
</comment>
<evidence type="ECO:0000255" key="1">
    <source>
        <dbReference type="HAMAP-Rule" id="MF_01451"/>
    </source>
</evidence>
<evidence type="ECO:0000256" key="2">
    <source>
        <dbReference type="SAM" id="MobiDB-lite"/>
    </source>
</evidence>
<feature type="chain" id="PRO_0000379266" description="ATP-dependent helicase/nuclease subunit A">
    <location>
        <begin position="1"/>
        <end position="1392"/>
    </location>
</feature>
<feature type="domain" description="UvrD-like helicase ATP-binding" evidence="1">
    <location>
        <begin position="3"/>
        <end position="489"/>
    </location>
</feature>
<feature type="domain" description="UvrD-like helicase C-terminal" evidence="1">
    <location>
        <begin position="556"/>
        <end position="886"/>
    </location>
</feature>
<feature type="region of interest" description="Disordered" evidence="2">
    <location>
        <begin position="291"/>
        <end position="319"/>
    </location>
</feature>
<feature type="region of interest" description="Disordered" evidence="2">
    <location>
        <begin position="555"/>
        <end position="594"/>
    </location>
</feature>
<feature type="region of interest" description="Disordered" evidence="2">
    <location>
        <begin position="1051"/>
        <end position="1126"/>
    </location>
</feature>
<feature type="compositionally biased region" description="Basic and acidic residues" evidence="2">
    <location>
        <begin position="305"/>
        <end position="319"/>
    </location>
</feature>
<feature type="compositionally biased region" description="Basic and acidic residues" evidence="2">
    <location>
        <begin position="567"/>
        <end position="583"/>
    </location>
</feature>
<feature type="compositionally biased region" description="Acidic residues" evidence="2">
    <location>
        <begin position="584"/>
        <end position="594"/>
    </location>
</feature>
<feature type="compositionally biased region" description="Basic and acidic residues" evidence="2">
    <location>
        <begin position="1088"/>
        <end position="1113"/>
    </location>
</feature>
<feature type="binding site" evidence="1">
    <location>
        <begin position="24"/>
        <end position="31"/>
    </location>
    <ligand>
        <name>ATP</name>
        <dbReference type="ChEBI" id="CHEBI:30616"/>
    </ligand>
</feature>
<dbReference type="EC" id="3.1.-.-" evidence="1"/>
<dbReference type="EC" id="5.6.2.4" evidence="1"/>
<dbReference type="EMBL" id="CP001336">
    <property type="protein sequence ID" value="ACL20856.1"/>
    <property type="molecule type" value="Genomic_DNA"/>
</dbReference>
<dbReference type="RefSeq" id="WP_015944254.1">
    <property type="nucleotide sequence ID" value="NC_011830.1"/>
</dbReference>
<dbReference type="SMR" id="B8FXD7"/>
<dbReference type="KEGG" id="dhd:Dhaf_2832"/>
<dbReference type="HOGENOM" id="CLU_001114_3_1_9"/>
<dbReference type="Proteomes" id="UP000007726">
    <property type="component" value="Chromosome"/>
</dbReference>
<dbReference type="GO" id="GO:0005829">
    <property type="term" value="C:cytosol"/>
    <property type="evidence" value="ECO:0007669"/>
    <property type="project" value="TreeGrafter"/>
</dbReference>
<dbReference type="GO" id="GO:0033202">
    <property type="term" value="C:DNA helicase complex"/>
    <property type="evidence" value="ECO:0007669"/>
    <property type="project" value="TreeGrafter"/>
</dbReference>
<dbReference type="GO" id="GO:0043138">
    <property type="term" value="F:3'-5' DNA helicase activity"/>
    <property type="evidence" value="ECO:0007669"/>
    <property type="project" value="UniProtKB-UniRule"/>
</dbReference>
<dbReference type="GO" id="GO:0008408">
    <property type="term" value="F:3'-5' exonuclease activity"/>
    <property type="evidence" value="ECO:0007669"/>
    <property type="project" value="UniProtKB-UniRule"/>
</dbReference>
<dbReference type="GO" id="GO:0005524">
    <property type="term" value="F:ATP binding"/>
    <property type="evidence" value="ECO:0007669"/>
    <property type="project" value="UniProtKB-UniRule"/>
</dbReference>
<dbReference type="GO" id="GO:0016887">
    <property type="term" value="F:ATP hydrolysis activity"/>
    <property type="evidence" value="ECO:0007669"/>
    <property type="project" value="RHEA"/>
</dbReference>
<dbReference type="GO" id="GO:0003690">
    <property type="term" value="F:double-stranded DNA binding"/>
    <property type="evidence" value="ECO:0007669"/>
    <property type="project" value="UniProtKB-UniRule"/>
</dbReference>
<dbReference type="GO" id="GO:0000724">
    <property type="term" value="P:double-strand break repair via homologous recombination"/>
    <property type="evidence" value="ECO:0007669"/>
    <property type="project" value="UniProtKB-UniRule"/>
</dbReference>
<dbReference type="CDD" id="cd17932">
    <property type="entry name" value="DEXQc_UvrD"/>
    <property type="match status" value="1"/>
</dbReference>
<dbReference type="Gene3D" id="1.10.274.50">
    <property type="match status" value="1"/>
</dbReference>
<dbReference type="Gene3D" id="3.90.320.10">
    <property type="match status" value="1"/>
</dbReference>
<dbReference type="Gene3D" id="3.40.50.300">
    <property type="entry name" value="P-loop containing nucleotide triphosphate hydrolases"/>
    <property type="match status" value="4"/>
</dbReference>
<dbReference type="HAMAP" id="MF_01451">
    <property type="entry name" value="AddA"/>
    <property type="match status" value="1"/>
</dbReference>
<dbReference type="InterPro" id="IPR014152">
    <property type="entry name" value="AddA"/>
</dbReference>
<dbReference type="InterPro" id="IPR014017">
    <property type="entry name" value="DNA_helicase_UvrD-like_C"/>
</dbReference>
<dbReference type="InterPro" id="IPR000212">
    <property type="entry name" value="DNA_helicase_UvrD/REP"/>
</dbReference>
<dbReference type="InterPro" id="IPR027417">
    <property type="entry name" value="P-loop_NTPase"/>
</dbReference>
<dbReference type="InterPro" id="IPR011604">
    <property type="entry name" value="PDDEXK-like_dom_sf"/>
</dbReference>
<dbReference type="InterPro" id="IPR038726">
    <property type="entry name" value="PDDEXK_AddAB-type"/>
</dbReference>
<dbReference type="InterPro" id="IPR011335">
    <property type="entry name" value="Restrct_endonuc-II-like"/>
</dbReference>
<dbReference type="InterPro" id="IPR014016">
    <property type="entry name" value="UvrD-like_ATP-bd"/>
</dbReference>
<dbReference type="PANTHER" id="PTHR11070:SF48">
    <property type="entry name" value="ATP-DEPENDENT HELICASE_NUCLEASE SUBUNIT A"/>
    <property type="match status" value="1"/>
</dbReference>
<dbReference type="PANTHER" id="PTHR11070">
    <property type="entry name" value="UVRD / RECB / PCRA DNA HELICASE FAMILY MEMBER"/>
    <property type="match status" value="1"/>
</dbReference>
<dbReference type="Pfam" id="PF12705">
    <property type="entry name" value="PDDEXK_1"/>
    <property type="match status" value="1"/>
</dbReference>
<dbReference type="Pfam" id="PF00580">
    <property type="entry name" value="UvrD-helicase"/>
    <property type="match status" value="1"/>
</dbReference>
<dbReference type="Pfam" id="PF13361">
    <property type="entry name" value="UvrD_C"/>
    <property type="match status" value="1"/>
</dbReference>
<dbReference type="SUPFAM" id="SSF52540">
    <property type="entry name" value="P-loop containing nucleoside triphosphate hydrolases"/>
    <property type="match status" value="1"/>
</dbReference>
<dbReference type="SUPFAM" id="SSF52980">
    <property type="entry name" value="Restriction endonuclease-like"/>
    <property type="match status" value="1"/>
</dbReference>
<dbReference type="PROSITE" id="PS51198">
    <property type="entry name" value="UVRD_HELICASE_ATP_BIND"/>
    <property type="match status" value="1"/>
</dbReference>
<dbReference type="PROSITE" id="PS51217">
    <property type="entry name" value="UVRD_HELICASE_CTER"/>
    <property type="match status" value="1"/>
</dbReference>
<sequence>MNNPKWTPAQQAAIDLKGQLLVAAAAGSGKTAVLVQRLFKQITDVDEQVDVDRFLVVTFTKAAAAEMRERIGKALDEALFGAAEPAQVEHLLQQRALLYRASITTLHSFCMELIRQYFYLIELDPAFRVADEAEADLLRQDTLEDLFEAYYGEETPAFQSLVDAFGTDRDDQPLMASILRLHEFAMSQVHPGEWLEHLPAAYDWHSLDDLMESPWGQVVRQGVRDKVEEGLILLERAYRLAELPGGPVHYLPVLEDDQSRLGFLREMAEKGTWSDIETAFKSAAAFPGLPRGSKKNLPDSLIDEENSKRLREESKKARDEAKKKLEEIKNTVFSVPLTDQLPFLNKMGELVGTLAQVTQHFAREYQKAKRQRNCVDFSDLEHYALQLLAKDKQPTEIALKLQAYYAEVLVDEYQDINPVQERILQLVSRQEEGKANLFMVGDVKQSIYRFRMADPGLFLRKYGEFPHYQEGGGAAPNLVIDLNQNFRSRPEVIQGINYLFYQIMTEGAGEIVYDEQAALRPGAKFVSDGELRTAEGPIEVHLFDPKAIDLSLGQKRGAEDAATEVDSPAKGEGEEFEQNREPESGDDESSLEEAETARIEARLVAARIQKMVLEREFQIHDKELGDYRPVQYADIVILMRSLASVASVYAEEFQKAGIPVYAETNSGYFGTNEVDTVLSLLKIIDNPRLDIPFAAVLRSPLVGMNGTELGKLRSLLPQGDFYETLVLTFWAGDAHRQEEGHEFYSEIREILGKHWESLPQLEVKVRHILETSPEIKEKVDAFFPKLQEWRHRSRRTSLADLLWHLYEDTGYLAYVGTLPAGAQRQANLRVLYDRACRYEATNYRGLFRFLRFLEKFQSQGKDLGNASIVGEKENVVRFITVHSSKGLEFPVVFIAGLGKKFNTRSLSSQLLLHSHLGVGIPLIDIENQVRYPSVIQYAVKERLWQEALAEELRILYVALTRGKERLFLFGHQHKLAEAINKWRSLALSCPDTAFPDGQLRGAKTYLDWLGPALVRHPEDLFKLGSFPTASELPDSSSQWKVILHDQIAGKGPVQEATSSQDEIILPDQETLGEREASEETEIPGETEASGKTEIPGETKNSEETKTSEDKKNLEAQTPETADLDTKNLQEEVFRQLNWQYPYPEGVNQSAKTSVSELKRQSLWYMDNEYSSPSSSSSSSPSALSAPSFLRPQFIVSRKELTPAERGTAVHAAIQHLPLALWRDTWEELAQEVRESMLQEHIDSLIRREILSAEQGGAVSVSQLKNLLDSTSGKRLWEAEEVRREVPFTLSLRLRAQKEPVLVQGIIDAVLLSHQEHEAQVMDFKTDNLAGVPDPELVLTQRYGLQLGLYALAVERLLKVPVRECIIYATSLNREFVMQREAVQAALESVVIV</sequence>
<protein>
    <recommendedName>
        <fullName evidence="1">ATP-dependent helicase/nuclease subunit A</fullName>
        <ecNumber evidence="1">3.1.-.-</ecNumber>
        <ecNumber evidence="1">5.6.2.4</ecNumber>
    </recommendedName>
    <alternativeName>
        <fullName evidence="1">ATP-dependent helicase/nuclease AddA</fullName>
    </alternativeName>
    <alternativeName>
        <fullName evidence="1">DNA 3'-5' helicase AddA</fullName>
    </alternativeName>
</protein>
<proteinExistence type="inferred from homology"/>
<name>ADDA_DESHD</name>